<name>DTX26_ARATH</name>
<reference key="1">
    <citation type="journal article" date="2000" name="Nature">
        <title>Sequence and analysis of chromosome 5 of the plant Arabidopsis thaliana.</title>
        <authorList>
            <person name="Tabata S."/>
            <person name="Kaneko T."/>
            <person name="Nakamura Y."/>
            <person name="Kotani H."/>
            <person name="Kato T."/>
            <person name="Asamizu E."/>
            <person name="Miyajima N."/>
            <person name="Sasamoto S."/>
            <person name="Kimura T."/>
            <person name="Hosouchi T."/>
            <person name="Kawashima K."/>
            <person name="Kohara M."/>
            <person name="Matsumoto M."/>
            <person name="Matsuno A."/>
            <person name="Muraki A."/>
            <person name="Nakayama S."/>
            <person name="Nakazaki N."/>
            <person name="Naruo K."/>
            <person name="Okumura S."/>
            <person name="Shinpo S."/>
            <person name="Takeuchi C."/>
            <person name="Wada T."/>
            <person name="Watanabe A."/>
            <person name="Yamada M."/>
            <person name="Yasuda M."/>
            <person name="Sato S."/>
            <person name="de la Bastide M."/>
            <person name="Huang E."/>
            <person name="Spiegel L."/>
            <person name="Gnoj L."/>
            <person name="O'Shaughnessy A."/>
            <person name="Preston R."/>
            <person name="Habermann K."/>
            <person name="Murray J."/>
            <person name="Johnson D."/>
            <person name="Rohlfing T."/>
            <person name="Nelson J."/>
            <person name="Stoneking T."/>
            <person name="Pepin K."/>
            <person name="Spieth J."/>
            <person name="Sekhon M."/>
            <person name="Armstrong J."/>
            <person name="Becker M."/>
            <person name="Belter E."/>
            <person name="Cordum H."/>
            <person name="Cordes M."/>
            <person name="Courtney L."/>
            <person name="Courtney W."/>
            <person name="Dante M."/>
            <person name="Du H."/>
            <person name="Edwards J."/>
            <person name="Fryman J."/>
            <person name="Haakensen B."/>
            <person name="Lamar E."/>
            <person name="Latreille P."/>
            <person name="Leonard S."/>
            <person name="Meyer R."/>
            <person name="Mulvaney E."/>
            <person name="Ozersky P."/>
            <person name="Riley A."/>
            <person name="Strowmatt C."/>
            <person name="Wagner-McPherson C."/>
            <person name="Wollam A."/>
            <person name="Yoakum M."/>
            <person name="Bell M."/>
            <person name="Dedhia N."/>
            <person name="Parnell L."/>
            <person name="Shah R."/>
            <person name="Rodriguez M."/>
            <person name="Hoon See L."/>
            <person name="Vil D."/>
            <person name="Baker J."/>
            <person name="Kirchoff K."/>
            <person name="Toth K."/>
            <person name="King L."/>
            <person name="Bahret A."/>
            <person name="Miller B."/>
            <person name="Marra M.A."/>
            <person name="Martienssen R."/>
            <person name="McCombie W.R."/>
            <person name="Wilson R.K."/>
            <person name="Murphy G."/>
            <person name="Bancroft I."/>
            <person name="Volckaert G."/>
            <person name="Wambutt R."/>
            <person name="Duesterhoeft A."/>
            <person name="Stiekema W."/>
            <person name="Pohl T."/>
            <person name="Entian K.-D."/>
            <person name="Terryn N."/>
            <person name="Hartley N."/>
            <person name="Bent E."/>
            <person name="Johnson S."/>
            <person name="Langham S.-A."/>
            <person name="McCullagh B."/>
            <person name="Robben J."/>
            <person name="Grymonprez B."/>
            <person name="Zimmermann W."/>
            <person name="Ramsperger U."/>
            <person name="Wedler H."/>
            <person name="Balke K."/>
            <person name="Wedler E."/>
            <person name="Peters S."/>
            <person name="van Staveren M."/>
            <person name="Dirkse W."/>
            <person name="Mooijman P."/>
            <person name="Klein Lankhorst R."/>
            <person name="Weitzenegger T."/>
            <person name="Bothe G."/>
            <person name="Rose M."/>
            <person name="Hauf J."/>
            <person name="Berneiser S."/>
            <person name="Hempel S."/>
            <person name="Feldpausch M."/>
            <person name="Lamberth S."/>
            <person name="Villarroel R."/>
            <person name="Gielen J."/>
            <person name="Ardiles W."/>
            <person name="Bents O."/>
            <person name="Lemcke K."/>
            <person name="Kolesov G."/>
            <person name="Mayer K.F.X."/>
            <person name="Rudd S."/>
            <person name="Schoof H."/>
            <person name="Schueller C."/>
            <person name="Zaccaria P."/>
            <person name="Mewes H.-W."/>
            <person name="Bevan M."/>
            <person name="Fransz P.F."/>
        </authorList>
    </citation>
    <scope>NUCLEOTIDE SEQUENCE [LARGE SCALE GENOMIC DNA]</scope>
    <source>
        <strain>cv. Columbia</strain>
    </source>
</reference>
<reference key="2">
    <citation type="journal article" date="2017" name="Plant J.">
        <title>Araport11: a complete reannotation of the Arabidopsis thaliana reference genome.</title>
        <authorList>
            <person name="Cheng C.Y."/>
            <person name="Krishnakumar V."/>
            <person name="Chan A.P."/>
            <person name="Thibaud-Nissen F."/>
            <person name="Schobel S."/>
            <person name="Town C.D."/>
        </authorList>
    </citation>
    <scope>GENOME REANNOTATION</scope>
    <source>
        <strain>cv. Columbia</strain>
    </source>
</reference>
<reference key="3">
    <citation type="journal article" date="2006" name="Plant Biotechnol. J.">
        <title>Simultaneous high-throughput recombinational cloning of open reading frames in closed and open configurations.</title>
        <authorList>
            <person name="Underwood B.A."/>
            <person name="Vanderhaeghen R."/>
            <person name="Whitford R."/>
            <person name="Town C.D."/>
            <person name="Hilson P."/>
        </authorList>
    </citation>
    <scope>NUCLEOTIDE SEQUENCE [LARGE SCALE MRNA]</scope>
    <source>
        <strain>cv. Columbia</strain>
    </source>
</reference>
<reference key="4">
    <citation type="journal article" date="2002" name="J. Biol. Chem.">
        <title>Functional cloning and characterization of a plant efflux carrier for multidrug and heavy metal detoxification.</title>
        <authorList>
            <person name="Li L."/>
            <person name="He Z."/>
            <person name="Pandey G.K."/>
            <person name="Tsuchiya T."/>
            <person name="Luan S."/>
        </authorList>
    </citation>
    <scope>GENE FAMILY</scope>
    <scope>NOMENCLATURE</scope>
</reference>
<reference key="5">
    <citation type="journal article" date="2003" name="Eur. J. Biochem.">
        <title>The multidrug/oligosaccharidyl-lipid/polysaccharide (MOP) exporter superfamily.</title>
        <authorList>
            <person name="Hvorup R.N."/>
            <person name="Winnen B."/>
            <person name="Chang A.B."/>
            <person name="Jiang Y."/>
            <person name="Zhou X.F."/>
            <person name="Saier M.H. Jr."/>
        </authorList>
    </citation>
    <scope>GENE FAMILY</scope>
</reference>
<gene>
    <name evidence="2" type="primary">DTX26</name>
    <name evidence="4" type="ordered locus">At5g10420</name>
    <name evidence="5" type="ORF">F12B17_230</name>
</gene>
<protein>
    <recommendedName>
        <fullName evidence="2">Protein DETOXIFICATION 26</fullName>
        <shortName evidence="2">AtDTX26</shortName>
    </recommendedName>
    <alternativeName>
        <fullName evidence="3">Multidrug and toxic compound extrusion protein 26</fullName>
        <shortName evidence="3">MATE protein 26</shortName>
    </alternativeName>
</protein>
<accession>Q1PDX9</accession>
<accession>Q9LX95</accession>
<organism>
    <name type="scientific">Arabidopsis thaliana</name>
    <name type="common">Mouse-ear cress</name>
    <dbReference type="NCBI Taxonomy" id="3702"/>
    <lineage>
        <taxon>Eukaryota</taxon>
        <taxon>Viridiplantae</taxon>
        <taxon>Streptophyta</taxon>
        <taxon>Embryophyta</taxon>
        <taxon>Tracheophyta</taxon>
        <taxon>Spermatophyta</taxon>
        <taxon>Magnoliopsida</taxon>
        <taxon>eudicotyledons</taxon>
        <taxon>Gunneridae</taxon>
        <taxon>Pentapetalae</taxon>
        <taxon>rosids</taxon>
        <taxon>malvids</taxon>
        <taxon>Brassicales</taxon>
        <taxon>Brassicaceae</taxon>
        <taxon>Camelineae</taxon>
        <taxon>Arabidopsis</taxon>
    </lineage>
</organism>
<evidence type="ECO:0000255" key="1"/>
<evidence type="ECO:0000303" key="2">
    <source>
    </source>
</evidence>
<evidence type="ECO:0000305" key="3"/>
<evidence type="ECO:0000312" key="4">
    <source>
        <dbReference type="Araport" id="AT5G10420"/>
    </source>
</evidence>
<evidence type="ECO:0000312" key="5">
    <source>
        <dbReference type="EMBL" id="CAB89401.1"/>
    </source>
</evidence>
<sequence length="489" mass="53589">MDKKSGGTKAIEEATVPLLECHNAAEEGGGMKREIWIETKKIWYIVGPSIFTGLATYSILIITQAFAGHLGDLELAAISIINNFTLGFNYGLLLGMASALETLCGQAFGAREYYMLGVYMQRYWIILFLCCILLLPMYLFATPILKFIGQSDDIAELTGTIALWVIPVHFAFAFFFPLNRFLQCQLKNKVIAISAGVSLAVHILVCWFFVYGYKLGIIGTMASVNVPWWLNIFILFLYSTRGGCTLTWTGFSSEAFTGLLELTKLSASSGIMLCLENWYYKILMLMTGNLVNAKIAVDSLSICMSVNGWEMMIPLAFFAGTGVRVANELGAGNGKGARFATIVSITLSLMIGLFFTVIIVIFHDQIGSIFSSSEAVLNAVDNLSVLLAFTVLLNSVQPVLSGVAVGSGWQSYVAYINLGCYYLIGLPFGLTMGWIFKFGVKGIWAGMIFGGTAIQTLILIIITTRCDWDNEAHKSSVRIKKWLVSDAGN</sequence>
<keyword id="KW-0472">Membrane</keyword>
<keyword id="KW-1185">Reference proteome</keyword>
<keyword id="KW-0812">Transmembrane</keyword>
<keyword id="KW-1133">Transmembrane helix</keyword>
<keyword id="KW-0813">Transport</keyword>
<comment type="subcellular location">
    <subcellularLocation>
        <location evidence="1">Membrane</location>
        <topology evidence="1">Multi-pass membrane protein</topology>
    </subcellularLocation>
</comment>
<comment type="similarity">
    <text evidence="3">Belongs to the multi antimicrobial extrusion (MATE) (TC 2.A.66.1) family.</text>
</comment>
<comment type="sequence caution" evidence="3">
    <conflict type="erroneous gene model prediction">
        <sequence resource="EMBL-CDS" id="CAB89401"/>
    </conflict>
</comment>
<feature type="chain" id="PRO_0000434067" description="Protein DETOXIFICATION 26">
    <location>
        <begin position="1"/>
        <end position="489"/>
    </location>
</feature>
<feature type="transmembrane region" description="Helical" evidence="1">
    <location>
        <begin position="42"/>
        <end position="62"/>
    </location>
</feature>
<feature type="transmembrane region" description="Helical" evidence="1">
    <location>
        <begin position="75"/>
        <end position="95"/>
    </location>
</feature>
<feature type="transmembrane region" description="Helical" evidence="1">
    <location>
        <begin position="125"/>
        <end position="145"/>
    </location>
</feature>
<feature type="transmembrane region" description="Helical" evidence="1">
    <location>
        <begin position="157"/>
        <end position="177"/>
    </location>
</feature>
<feature type="transmembrane region" description="Helical" evidence="1">
    <location>
        <begin position="190"/>
        <end position="210"/>
    </location>
</feature>
<feature type="transmembrane region" description="Helical" evidence="1">
    <location>
        <begin position="217"/>
        <end position="237"/>
    </location>
</feature>
<feature type="transmembrane region" description="Helical" evidence="1">
    <location>
        <begin position="271"/>
        <end position="291"/>
    </location>
</feature>
<feature type="transmembrane region" description="Helical" evidence="1">
    <location>
        <begin position="300"/>
        <end position="320"/>
    </location>
</feature>
<feature type="transmembrane region" description="Helical" evidence="1">
    <location>
        <begin position="342"/>
        <end position="362"/>
    </location>
</feature>
<feature type="transmembrane region" description="Helical" evidence="1">
    <location>
        <begin position="385"/>
        <end position="405"/>
    </location>
</feature>
<feature type="transmembrane region" description="Helical" evidence="1">
    <location>
        <begin position="416"/>
        <end position="436"/>
    </location>
</feature>
<feature type="transmembrane region" description="Helical" evidence="1">
    <location>
        <begin position="442"/>
        <end position="462"/>
    </location>
</feature>
<proteinExistence type="evidence at transcript level"/>
<dbReference type="EMBL" id="AL353995">
    <property type="protein sequence ID" value="CAB89401.1"/>
    <property type="status" value="ALT_SEQ"/>
    <property type="molecule type" value="Genomic_DNA"/>
</dbReference>
<dbReference type="EMBL" id="CP002688">
    <property type="protein sequence ID" value="AED91538.1"/>
    <property type="molecule type" value="Genomic_DNA"/>
</dbReference>
<dbReference type="EMBL" id="DQ446939">
    <property type="protein sequence ID" value="ABE66150.1"/>
    <property type="molecule type" value="mRNA"/>
</dbReference>
<dbReference type="PIR" id="T49997">
    <property type="entry name" value="T49997"/>
</dbReference>
<dbReference type="RefSeq" id="NP_196604.2">
    <property type="nucleotide sequence ID" value="NM_121080.3"/>
</dbReference>
<dbReference type="SMR" id="Q1PDX9"/>
<dbReference type="IntAct" id="Q1PDX9">
    <property type="interactions" value="6"/>
</dbReference>
<dbReference type="PaxDb" id="3702-AT5G10420.1"/>
<dbReference type="ProteomicsDB" id="224285"/>
<dbReference type="EnsemblPlants" id="AT5G10420.1">
    <property type="protein sequence ID" value="AT5G10420.1"/>
    <property type="gene ID" value="AT5G10420"/>
</dbReference>
<dbReference type="GeneID" id="830906"/>
<dbReference type="Gramene" id="AT5G10420.1">
    <property type="protein sequence ID" value="AT5G10420.1"/>
    <property type="gene ID" value="AT5G10420"/>
</dbReference>
<dbReference type="KEGG" id="ath:AT5G10420"/>
<dbReference type="Araport" id="AT5G10420"/>
<dbReference type="TAIR" id="AT5G10420"/>
<dbReference type="eggNOG" id="KOG1347">
    <property type="taxonomic scope" value="Eukaryota"/>
</dbReference>
<dbReference type="HOGENOM" id="CLU_012893_1_4_1"/>
<dbReference type="InParanoid" id="Q1PDX9"/>
<dbReference type="OMA" id="MNVIMQA"/>
<dbReference type="PhylomeDB" id="Q1PDX9"/>
<dbReference type="PRO" id="PR:Q1PDX9"/>
<dbReference type="Proteomes" id="UP000006548">
    <property type="component" value="Chromosome 5"/>
</dbReference>
<dbReference type="ExpressionAtlas" id="Q1PDX9">
    <property type="expression patterns" value="baseline and differential"/>
</dbReference>
<dbReference type="GO" id="GO:0016020">
    <property type="term" value="C:membrane"/>
    <property type="evidence" value="ECO:0007669"/>
    <property type="project" value="UniProtKB-SubCell"/>
</dbReference>
<dbReference type="GO" id="GO:0015297">
    <property type="term" value="F:antiporter activity"/>
    <property type="evidence" value="ECO:0007669"/>
    <property type="project" value="InterPro"/>
</dbReference>
<dbReference type="GO" id="GO:0042910">
    <property type="term" value="F:xenobiotic transmembrane transporter activity"/>
    <property type="evidence" value="ECO:0007669"/>
    <property type="project" value="InterPro"/>
</dbReference>
<dbReference type="GO" id="GO:1990961">
    <property type="term" value="P:xenobiotic detoxification by transmembrane export across the plasma membrane"/>
    <property type="evidence" value="ECO:0007669"/>
    <property type="project" value="InterPro"/>
</dbReference>
<dbReference type="CDD" id="cd13132">
    <property type="entry name" value="MATE_eukaryotic"/>
    <property type="match status" value="1"/>
</dbReference>
<dbReference type="InterPro" id="IPR045069">
    <property type="entry name" value="MATE_euk"/>
</dbReference>
<dbReference type="InterPro" id="IPR002528">
    <property type="entry name" value="MATE_fam"/>
</dbReference>
<dbReference type="NCBIfam" id="TIGR00797">
    <property type="entry name" value="matE"/>
    <property type="match status" value="1"/>
</dbReference>
<dbReference type="PANTHER" id="PTHR11206">
    <property type="entry name" value="MULTIDRUG RESISTANCE PROTEIN"/>
    <property type="match status" value="1"/>
</dbReference>
<dbReference type="Pfam" id="PF01554">
    <property type="entry name" value="MatE"/>
    <property type="match status" value="2"/>
</dbReference>